<sequence length="946" mass="102257">MPASPLPALSPPASPRRNTSGASALGSRKADIPPDAIRGFATVGSLVRSEHFAQHFDDDIAGKDQEQSRKKSPEDVGNIAATKKKPGKRAATTSTADGEAKPKPKPRARKPKAADEEAVIIDPELRLPAAKVSPFFAAEGAPAAIEPSDEPVVDVPKLTKAGKPRKPRAKKENVGGEEAVPKPKRTRVTKPKAAKAKAGGKSQEEACVESAHFRKSEDTGDETVAGVLATRKSATTENVGSGEASIWDVPQSPKPKKKRAPKKPPPDPVINNLELDEAVSRRRDWTPPRDTAIPSPFTDSVGKENKQIEPDADNGGFTHMISNFAYAQALPAQVASTVADSATGTMAATKRRRIELLDVPGNQTTSRNSSPEKGKAPKKKPRTITDIATEQYQHRAAQLDQSDVASDFFQSHTAVTKVPLNDASLPNGDAPTKKPPRKRSTSKPASEKEKVGSKARSKKASTKAAAKPKHIAEKLLSPGSALMRMNKQDILFGTSSQLALEEPPTLVRQLQHALKESEVEADLSSNGMIAPPPRWPKLDKVVGKRSLWDASSRDVEGGMLEHMEDVYIPEFDRTQDFPLLMDGTNDQPDGAPPSFADIDDFEPAPPVIISSDGPTPPPTTSRTSQRKANDEPDHVMEGPVFEDIDDFDFQPPPSNQNVEFQDSFADDDEILHTSVQSSTHPPPRLRPPATSDPMNGSSKKPRGCPAKSQSAIATSGSPAVAKEPKRTKGKEVKSAPAPPTTPAKGSGRFIDIDEILDSDDEALQALSPTPPRIHNFENSQPLPLYSVSPTRAKKPKADSSVDSKIVPVHIIPTAHLEWLNLKNSIFPSITSHIRSLPSTRDPSKPSWHEKILMYDPIVLEDFTAYLNAKTSLRTWRRATKIQSKAWNKAQKSIGAQEIGVVEGGGNVLAVEKELEAWQVQSWCESMSVCCIWGEGRGKGGVRKGFY</sequence>
<keyword id="KW-0227">DNA damage</keyword>
<keyword id="KW-0233">DNA recombination</keyword>
<keyword id="KW-0234">DNA repair</keyword>
<keyword id="KW-0539">Nucleus</keyword>
<keyword id="KW-0597">Phosphoprotein</keyword>
<name>SLX4_PHANO</name>
<gene>
    <name evidence="1" type="primary">SLX4</name>
    <name type="ORF">SNOG_00524</name>
</gene>
<evidence type="ECO:0000255" key="1">
    <source>
        <dbReference type="HAMAP-Rule" id="MF_03110"/>
    </source>
</evidence>
<evidence type="ECO:0000256" key="2">
    <source>
        <dbReference type="SAM" id="MobiDB-lite"/>
    </source>
</evidence>
<protein>
    <recommendedName>
        <fullName evidence="1">Structure-specific endonuclease subunit SLX4</fullName>
    </recommendedName>
</protein>
<proteinExistence type="inferred from homology"/>
<comment type="function">
    <text evidence="1">Regulatory subunit of the SLX1-SLX4 structure-specific endonuclease that resolves DNA secondary structures generated during DNA repair and recombination. Has endonuclease activity towards branched DNA substrates, introducing single-strand cuts in duplex DNA close to junctions with ss-DNA.</text>
</comment>
<comment type="subunit">
    <text evidence="1">Forms a heterodimer with SLX1.</text>
</comment>
<comment type="subcellular location">
    <subcellularLocation>
        <location evidence="1">Nucleus</location>
    </subcellularLocation>
</comment>
<comment type="PTM">
    <text evidence="1">Phosphorylated in response to DNA damage.</text>
</comment>
<comment type="similarity">
    <text evidence="1">Belongs to the SLX4 family.</text>
</comment>
<organism>
    <name type="scientific">Phaeosphaeria nodorum (strain SN15 / ATCC MYA-4574 / FGSC 10173)</name>
    <name type="common">Glume blotch fungus</name>
    <name type="synonym">Parastagonospora nodorum</name>
    <dbReference type="NCBI Taxonomy" id="321614"/>
    <lineage>
        <taxon>Eukaryota</taxon>
        <taxon>Fungi</taxon>
        <taxon>Dikarya</taxon>
        <taxon>Ascomycota</taxon>
        <taxon>Pezizomycotina</taxon>
        <taxon>Dothideomycetes</taxon>
        <taxon>Pleosporomycetidae</taxon>
        <taxon>Pleosporales</taxon>
        <taxon>Pleosporineae</taxon>
        <taxon>Phaeosphaeriaceae</taxon>
        <taxon>Parastagonospora</taxon>
    </lineage>
</organism>
<dbReference type="EMBL" id="CH445325">
    <property type="protein sequence ID" value="EAT92019.2"/>
    <property type="molecule type" value="Genomic_DNA"/>
</dbReference>
<dbReference type="RefSeq" id="XP_001791208.1">
    <property type="nucleotide sequence ID" value="XM_001791156.1"/>
</dbReference>
<dbReference type="SMR" id="Q0V640"/>
<dbReference type="STRING" id="321614.Q0V640"/>
<dbReference type="EnsemblFungi" id="SNOT_00524">
    <property type="protein sequence ID" value="SNOT_00524"/>
    <property type="gene ID" value="SNOG_00524"/>
</dbReference>
<dbReference type="GeneID" id="5968610"/>
<dbReference type="KEGG" id="pno:SNOG_00524"/>
<dbReference type="VEuPathDB" id="FungiDB:JI435_005240"/>
<dbReference type="eggNOG" id="ENOG502S832">
    <property type="taxonomic scope" value="Eukaryota"/>
</dbReference>
<dbReference type="HOGENOM" id="CLU_302495_0_0_1"/>
<dbReference type="InParanoid" id="Q0V640"/>
<dbReference type="Proteomes" id="UP000001055">
    <property type="component" value="Unassembled WGS sequence"/>
</dbReference>
<dbReference type="GO" id="GO:0033557">
    <property type="term" value="C:Slx1-Slx4 complex"/>
    <property type="evidence" value="ECO:0007669"/>
    <property type="project" value="UniProtKB-UniRule"/>
</dbReference>
<dbReference type="GO" id="GO:0017108">
    <property type="term" value="F:5'-flap endonuclease activity"/>
    <property type="evidence" value="ECO:0007669"/>
    <property type="project" value="InterPro"/>
</dbReference>
<dbReference type="GO" id="GO:0006310">
    <property type="term" value="P:DNA recombination"/>
    <property type="evidence" value="ECO:0007669"/>
    <property type="project" value="UniProtKB-UniRule"/>
</dbReference>
<dbReference type="GO" id="GO:0006281">
    <property type="term" value="P:DNA repair"/>
    <property type="evidence" value="ECO:0007669"/>
    <property type="project" value="UniProtKB-UniRule"/>
</dbReference>
<dbReference type="GO" id="GO:0006260">
    <property type="term" value="P:DNA replication"/>
    <property type="evidence" value="ECO:0007669"/>
    <property type="project" value="InterPro"/>
</dbReference>
<dbReference type="HAMAP" id="MF_03110">
    <property type="entry name" value="Endonuc_su_Slx4"/>
    <property type="match status" value="1"/>
</dbReference>
<dbReference type="InterPro" id="IPR027784">
    <property type="entry name" value="Slx4_ascomycetes"/>
</dbReference>
<dbReference type="InterPro" id="IPR018574">
    <property type="entry name" value="Structure-sp_endonuc_su_Slx4"/>
</dbReference>
<dbReference type="Pfam" id="PF09494">
    <property type="entry name" value="Slx4"/>
    <property type="match status" value="1"/>
</dbReference>
<accession>Q0V640</accession>
<feature type="chain" id="PRO_0000388040" description="Structure-specific endonuclease subunit SLX4">
    <location>
        <begin position="1"/>
        <end position="946"/>
    </location>
</feature>
<feature type="region of interest" description="Disordered" evidence="2">
    <location>
        <begin position="1"/>
        <end position="35"/>
    </location>
</feature>
<feature type="region of interest" description="Disordered" evidence="2">
    <location>
        <begin position="54"/>
        <end position="119"/>
    </location>
</feature>
<feature type="region of interest" description="Disordered" evidence="2">
    <location>
        <begin position="147"/>
        <end position="318"/>
    </location>
</feature>
<feature type="region of interest" description="Disordered" evidence="2">
    <location>
        <begin position="339"/>
        <end position="399"/>
    </location>
</feature>
<feature type="region of interest" description="Disordered" evidence="2">
    <location>
        <begin position="416"/>
        <end position="471"/>
    </location>
</feature>
<feature type="region of interest" description="Disordered" evidence="2">
    <location>
        <begin position="577"/>
        <end position="748"/>
    </location>
</feature>
<feature type="region of interest" description="Disordered" evidence="2">
    <location>
        <begin position="765"/>
        <end position="799"/>
    </location>
</feature>
<feature type="compositionally biased region" description="Pro residues" evidence="2">
    <location>
        <begin position="1"/>
        <end position="14"/>
    </location>
</feature>
<feature type="compositionally biased region" description="Basic and acidic residues" evidence="2">
    <location>
        <begin position="54"/>
        <end position="74"/>
    </location>
</feature>
<feature type="compositionally biased region" description="Basic residues" evidence="2">
    <location>
        <begin position="160"/>
        <end position="169"/>
    </location>
</feature>
<feature type="compositionally biased region" description="Basic residues" evidence="2">
    <location>
        <begin position="182"/>
        <end position="195"/>
    </location>
</feature>
<feature type="compositionally biased region" description="Basic and acidic residues" evidence="2">
    <location>
        <begin position="278"/>
        <end position="287"/>
    </location>
</feature>
<feature type="compositionally biased region" description="Basic residues" evidence="2">
    <location>
        <begin position="453"/>
        <end position="469"/>
    </location>
</feature>
<feature type="compositionally biased region" description="Basic and acidic residues" evidence="2">
    <location>
        <begin position="627"/>
        <end position="636"/>
    </location>
</feature>
<feature type="compositionally biased region" description="Polar residues" evidence="2">
    <location>
        <begin position="707"/>
        <end position="717"/>
    </location>
</feature>
<feature type="compositionally biased region" description="Basic and acidic residues" evidence="2">
    <location>
        <begin position="722"/>
        <end position="733"/>
    </location>
</feature>
<reference key="1">
    <citation type="journal article" date="2007" name="Plant Cell">
        <title>Dothideomycete-plant interactions illuminated by genome sequencing and EST analysis of the wheat pathogen Stagonospora nodorum.</title>
        <authorList>
            <person name="Hane J.K."/>
            <person name="Lowe R.G.T."/>
            <person name="Solomon P.S."/>
            <person name="Tan K.-C."/>
            <person name="Schoch C.L."/>
            <person name="Spatafora J.W."/>
            <person name="Crous P.W."/>
            <person name="Kodira C.D."/>
            <person name="Birren B.W."/>
            <person name="Galagan J.E."/>
            <person name="Torriani S.F.F."/>
            <person name="McDonald B.A."/>
            <person name="Oliver R.P."/>
        </authorList>
    </citation>
    <scope>NUCLEOTIDE SEQUENCE [LARGE SCALE GENOMIC DNA]</scope>
    <source>
        <strain>SN15 / ATCC MYA-4574 / FGSC 10173</strain>
    </source>
</reference>